<gene>
    <name evidence="1" type="primary">valS</name>
    <name type="ordered locus">MMOB1580</name>
</gene>
<name>SYV_MYCM1</name>
<organism>
    <name type="scientific">Mycoplasma mobile (strain ATCC 43663 / 163K / NCTC 11711)</name>
    <name type="common">Mesomycoplasma mobile</name>
    <dbReference type="NCBI Taxonomy" id="267748"/>
    <lineage>
        <taxon>Bacteria</taxon>
        <taxon>Bacillati</taxon>
        <taxon>Mycoplasmatota</taxon>
        <taxon>Mycoplasmoidales</taxon>
        <taxon>Metamycoplasmataceae</taxon>
        <taxon>Mesomycoplasma</taxon>
    </lineage>
</organism>
<sequence length="839" mass="99399">MEKIYNHKIVEKDKNEKWIKKEYFSTHDLTKKPFSILLPPPNVTGKLHIGHAWNTTLQDFLIRLKRLQGYDVLWLPGTDHAGIATQAKVEKRLLDQKIFKSDLTKEELFEKAMDWKNEYANEIKKQWSKLGLALDYKKERFTLDELSNKAVNDIFVMLYKDGYIYRGNRAIYYDTFLQTSLSNIEVINVEKESKMYYLKYFLENSNSEYVLVATTRPETLASDVALIINPNDKKNSHYLGKNFVNPLTKKIIKMHSDDYAIMNFGSGIVKISAHDMNDFDVIKRLNLEVIETIDKFGKMTNAIPEFENMSSLEARENIVLKLKKENLIDKIENIKSNIIMSERSNTVAEVLVMPQWFIKMEPFSKMILKKIQNENEDDKKVLFFPKKFENILKIWMQEAHDWNISRQLWWGHKIPAWYDEKGNIKVQTTSPGSNWTQDQDVLDTWFSSGIAPFSFLNWPQKSEFLKRYYPTSVIVTAYDIIFFWVARMYFMGIYSMKNIPFKKALIHGLIRDEQGRKMSKSLGNGIDPMDLIEKYGADSLRWFLMTNSTPGQDIRFNYDKIESAWSLINKIWNISRYIKMLDSDKKEIIPEEIEQNANSWILEKFENLKILIYEKSETFEFSVIGKEIFKFINEDFSSVYIEIIKGTDSKEFISKIWSNFLILLHPFLPFLTDHLYFELNKKELLESDFFELKSRKNNLFIDETIEIISTLREYRTRFNLSHKIDLNYNLVSINNSNQCDFNLDLKKYLIKKMANANFSENGQIFFKLNNYELRLQIPEEVKKEEETIRIKRILFLESEIKRSQSILSNEKFINNASEIKVKEEKEKLEKYIKEFEEIK</sequence>
<reference key="1">
    <citation type="journal article" date="2004" name="Genome Res.">
        <title>The complete genome and proteome of Mycoplasma mobile.</title>
        <authorList>
            <person name="Jaffe J.D."/>
            <person name="Stange-Thomann N."/>
            <person name="Smith C."/>
            <person name="DeCaprio D."/>
            <person name="Fisher S."/>
            <person name="Butler J."/>
            <person name="Calvo S."/>
            <person name="Elkins T."/>
            <person name="FitzGerald M.G."/>
            <person name="Hafez N."/>
            <person name="Kodira C.D."/>
            <person name="Major J."/>
            <person name="Wang S."/>
            <person name="Wilkinson J."/>
            <person name="Nicol R."/>
            <person name="Nusbaum C."/>
            <person name="Birren B."/>
            <person name="Berg H.C."/>
            <person name="Church G.M."/>
        </authorList>
    </citation>
    <scope>NUCLEOTIDE SEQUENCE [LARGE SCALE GENOMIC DNA]</scope>
    <source>
        <strain>ATCC 43663 / NCTC 11711 / 163 K</strain>
    </source>
</reference>
<accession>Q6KID2</accession>
<keyword id="KW-0030">Aminoacyl-tRNA synthetase</keyword>
<keyword id="KW-0067">ATP-binding</keyword>
<keyword id="KW-0175">Coiled coil</keyword>
<keyword id="KW-0963">Cytoplasm</keyword>
<keyword id="KW-0436">Ligase</keyword>
<keyword id="KW-0547">Nucleotide-binding</keyword>
<keyword id="KW-0648">Protein biosynthesis</keyword>
<keyword id="KW-1185">Reference proteome</keyword>
<proteinExistence type="inferred from homology"/>
<protein>
    <recommendedName>
        <fullName evidence="1">Valine--tRNA ligase</fullName>
        <ecNumber evidence="1">6.1.1.9</ecNumber>
    </recommendedName>
    <alternativeName>
        <fullName evidence="1">Valyl-tRNA synthetase</fullName>
        <shortName evidence="1">ValRS</shortName>
    </alternativeName>
</protein>
<evidence type="ECO:0000255" key="1">
    <source>
        <dbReference type="HAMAP-Rule" id="MF_02004"/>
    </source>
</evidence>
<feature type="chain" id="PRO_0000224511" description="Valine--tRNA ligase">
    <location>
        <begin position="1"/>
        <end position="839"/>
    </location>
</feature>
<feature type="coiled-coil region" evidence="1">
    <location>
        <begin position="315"/>
        <end position="343"/>
    </location>
</feature>
<feature type="coiled-coil region" evidence="1">
    <location>
        <begin position="813"/>
        <end position="839"/>
    </location>
</feature>
<feature type="short sequence motif" description="'HIGH' region">
    <location>
        <begin position="41"/>
        <end position="51"/>
    </location>
</feature>
<feature type="short sequence motif" description="'KMSKS' region">
    <location>
        <begin position="517"/>
        <end position="521"/>
    </location>
</feature>
<feature type="binding site" evidence="1">
    <location>
        <position position="520"/>
    </location>
    <ligand>
        <name>ATP</name>
        <dbReference type="ChEBI" id="CHEBI:30616"/>
    </ligand>
</feature>
<comment type="function">
    <text evidence="1">Catalyzes the attachment of valine to tRNA(Val). As ValRS can inadvertently accommodate and process structurally similar amino acids such as threonine, to avoid such errors, it has a 'posttransfer' editing activity that hydrolyzes mischarged Thr-tRNA(Val) in a tRNA-dependent manner.</text>
</comment>
<comment type="catalytic activity">
    <reaction evidence="1">
        <text>tRNA(Val) + L-valine + ATP = L-valyl-tRNA(Val) + AMP + diphosphate</text>
        <dbReference type="Rhea" id="RHEA:10704"/>
        <dbReference type="Rhea" id="RHEA-COMP:9672"/>
        <dbReference type="Rhea" id="RHEA-COMP:9708"/>
        <dbReference type="ChEBI" id="CHEBI:30616"/>
        <dbReference type="ChEBI" id="CHEBI:33019"/>
        <dbReference type="ChEBI" id="CHEBI:57762"/>
        <dbReference type="ChEBI" id="CHEBI:78442"/>
        <dbReference type="ChEBI" id="CHEBI:78537"/>
        <dbReference type="ChEBI" id="CHEBI:456215"/>
        <dbReference type="EC" id="6.1.1.9"/>
    </reaction>
</comment>
<comment type="subunit">
    <text evidence="1">Monomer.</text>
</comment>
<comment type="subcellular location">
    <subcellularLocation>
        <location evidence="1">Cytoplasm</location>
    </subcellularLocation>
</comment>
<comment type="domain">
    <text evidence="1">ValRS has two distinct active sites: one for aminoacylation and one for editing. The misactivated threonine is translocated from the active site to the editing site.</text>
</comment>
<comment type="domain">
    <text evidence="1">The C-terminal coiled-coil domain is crucial for aminoacylation activity.</text>
</comment>
<comment type="similarity">
    <text evidence="1">Belongs to the class-I aminoacyl-tRNA synthetase family. ValS type 1 subfamily.</text>
</comment>
<dbReference type="EC" id="6.1.1.9" evidence="1"/>
<dbReference type="EMBL" id="AE017308">
    <property type="protein sequence ID" value="AAT27644.1"/>
    <property type="molecule type" value="Genomic_DNA"/>
</dbReference>
<dbReference type="RefSeq" id="WP_011264678.1">
    <property type="nucleotide sequence ID" value="NC_006908.1"/>
</dbReference>
<dbReference type="SMR" id="Q6KID2"/>
<dbReference type="STRING" id="267748.MMOB1580"/>
<dbReference type="KEGG" id="mmo:MMOB1580"/>
<dbReference type="eggNOG" id="COG0525">
    <property type="taxonomic scope" value="Bacteria"/>
</dbReference>
<dbReference type="HOGENOM" id="CLU_001493_0_2_14"/>
<dbReference type="OrthoDB" id="9810365at2"/>
<dbReference type="Proteomes" id="UP000009072">
    <property type="component" value="Chromosome"/>
</dbReference>
<dbReference type="GO" id="GO:0005829">
    <property type="term" value="C:cytosol"/>
    <property type="evidence" value="ECO:0007669"/>
    <property type="project" value="TreeGrafter"/>
</dbReference>
<dbReference type="GO" id="GO:0002161">
    <property type="term" value="F:aminoacyl-tRNA deacylase activity"/>
    <property type="evidence" value="ECO:0007669"/>
    <property type="project" value="InterPro"/>
</dbReference>
<dbReference type="GO" id="GO:0005524">
    <property type="term" value="F:ATP binding"/>
    <property type="evidence" value="ECO:0007669"/>
    <property type="project" value="UniProtKB-UniRule"/>
</dbReference>
<dbReference type="GO" id="GO:0004832">
    <property type="term" value="F:valine-tRNA ligase activity"/>
    <property type="evidence" value="ECO:0007669"/>
    <property type="project" value="UniProtKB-UniRule"/>
</dbReference>
<dbReference type="GO" id="GO:0006438">
    <property type="term" value="P:valyl-tRNA aminoacylation"/>
    <property type="evidence" value="ECO:0007669"/>
    <property type="project" value="UniProtKB-UniRule"/>
</dbReference>
<dbReference type="CDD" id="cd07962">
    <property type="entry name" value="Anticodon_Ia_Val"/>
    <property type="match status" value="1"/>
</dbReference>
<dbReference type="CDD" id="cd00817">
    <property type="entry name" value="ValRS_core"/>
    <property type="match status" value="1"/>
</dbReference>
<dbReference type="Gene3D" id="3.40.50.620">
    <property type="entry name" value="HUPs"/>
    <property type="match status" value="3"/>
</dbReference>
<dbReference type="Gene3D" id="1.10.730.10">
    <property type="entry name" value="Isoleucyl-tRNA Synthetase, Domain 1"/>
    <property type="match status" value="1"/>
</dbReference>
<dbReference type="Gene3D" id="3.90.740.10">
    <property type="entry name" value="Valyl/Leucyl/Isoleucyl-tRNA synthetase, editing domain"/>
    <property type="match status" value="1"/>
</dbReference>
<dbReference type="HAMAP" id="MF_02004">
    <property type="entry name" value="Val_tRNA_synth_type1"/>
    <property type="match status" value="1"/>
</dbReference>
<dbReference type="InterPro" id="IPR001412">
    <property type="entry name" value="aa-tRNA-synth_I_CS"/>
</dbReference>
<dbReference type="InterPro" id="IPR002300">
    <property type="entry name" value="aa-tRNA-synth_Ia"/>
</dbReference>
<dbReference type="InterPro" id="IPR033705">
    <property type="entry name" value="Anticodon_Ia_Val"/>
</dbReference>
<dbReference type="InterPro" id="IPR013155">
    <property type="entry name" value="M/V/L/I-tRNA-synth_anticd-bd"/>
</dbReference>
<dbReference type="InterPro" id="IPR014729">
    <property type="entry name" value="Rossmann-like_a/b/a_fold"/>
</dbReference>
<dbReference type="InterPro" id="IPR010978">
    <property type="entry name" value="tRNA-bd_arm"/>
</dbReference>
<dbReference type="InterPro" id="IPR009080">
    <property type="entry name" value="tRNAsynth_Ia_anticodon-bd"/>
</dbReference>
<dbReference type="InterPro" id="IPR009008">
    <property type="entry name" value="Val/Leu/Ile-tRNA-synth_edit"/>
</dbReference>
<dbReference type="InterPro" id="IPR002303">
    <property type="entry name" value="Valyl-tRNA_ligase"/>
</dbReference>
<dbReference type="NCBIfam" id="NF004349">
    <property type="entry name" value="PRK05729.1"/>
    <property type="match status" value="1"/>
</dbReference>
<dbReference type="NCBIfam" id="TIGR00422">
    <property type="entry name" value="valS"/>
    <property type="match status" value="1"/>
</dbReference>
<dbReference type="PANTHER" id="PTHR11946:SF93">
    <property type="entry name" value="VALINE--TRNA LIGASE, CHLOROPLASTIC_MITOCHONDRIAL 2"/>
    <property type="match status" value="1"/>
</dbReference>
<dbReference type="PANTHER" id="PTHR11946">
    <property type="entry name" value="VALYL-TRNA SYNTHETASES"/>
    <property type="match status" value="1"/>
</dbReference>
<dbReference type="Pfam" id="PF08264">
    <property type="entry name" value="Anticodon_1"/>
    <property type="match status" value="1"/>
</dbReference>
<dbReference type="Pfam" id="PF00133">
    <property type="entry name" value="tRNA-synt_1"/>
    <property type="match status" value="2"/>
</dbReference>
<dbReference type="PRINTS" id="PR00986">
    <property type="entry name" value="TRNASYNTHVAL"/>
</dbReference>
<dbReference type="SUPFAM" id="SSF47323">
    <property type="entry name" value="Anticodon-binding domain of a subclass of class I aminoacyl-tRNA synthetases"/>
    <property type="match status" value="1"/>
</dbReference>
<dbReference type="SUPFAM" id="SSF52374">
    <property type="entry name" value="Nucleotidylyl transferase"/>
    <property type="match status" value="1"/>
</dbReference>
<dbReference type="SUPFAM" id="SSF46589">
    <property type="entry name" value="tRNA-binding arm"/>
    <property type="match status" value="1"/>
</dbReference>
<dbReference type="SUPFAM" id="SSF50677">
    <property type="entry name" value="ValRS/IleRS/LeuRS editing domain"/>
    <property type="match status" value="1"/>
</dbReference>
<dbReference type="PROSITE" id="PS00178">
    <property type="entry name" value="AA_TRNA_LIGASE_I"/>
    <property type="match status" value="1"/>
</dbReference>